<sequence>MVKALQGAAQNLPADVNQLIDQLERHCLAPDGSLVTKSVYSDLQLAREEMSRERLRYLEAMAIYCEAVAMVEEYQQAISVANHGGIRDVQGLYPQLGLKNSPQVYETLEHRLVVAEAAQKLRLPLISDGGEIHEEEIEKWSILSRSSLDSASTSFTISSTSNSVNYANSSANSVAGGISLSAVDTDVVGGVPNRFLGITPAYLSYVQLQNTISMDMADYQMFLAREIEGRLKEKCDKLADAIVDDTDSSTGNRNSSARLPERVKFIIEEIERDEAALREDLYSADRKFAEYYNVLEQILGVLIKLVKDLKLEHQHKYNEMQKTWLCKRCETMNAKLRVLENVLLLETYTPDSISALHNIRNYLVEATEEASAAYNKAVTRLREYQGVDPHFDTIARQYHDIVKKLENMQWTIHQVEMDLKSHD</sequence>
<comment type="function">
    <text evidence="2">Involved in microtubules reorganization during spindle and phragmoplast development.</text>
</comment>
<comment type="subunit">
    <text evidence="2">Part of the augmin complex composed of 8 subunits. The complex acts on microtubules and interacts with gamma-tubulin in spindles and the phragmoplast.</text>
</comment>
<comment type="interaction">
    <interactant intactId="EBI-25520241">
        <id>Q8GYM3</id>
    </interactant>
    <interactant intactId="EBI-4426557">
        <id>Q84MB2</id>
        <label>TIFY8</label>
    </interactant>
    <organismsDiffer>false</organismsDiffer>
    <experiments>3</experiments>
</comment>
<comment type="subcellular location">
    <subcellularLocation>
        <location evidence="2">Cytoplasm</location>
        <location evidence="2">Cytoskeleton</location>
        <location evidence="2">Spindle</location>
    </subcellularLocation>
    <subcellularLocation>
        <location evidence="2">Cytoplasm</location>
        <location evidence="2">Cytoskeleton</location>
        <location evidence="2">Phragmoplast</location>
    </subcellularLocation>
    <text evidence="2">Preferentially localizes to microtubules minus ends.</text>
</comment>
<comment type="disruption phenotype">
    <text evidence="2">Lethal when homozygous.</text>
</comment>
<comment type="similarity">
    <text evidence="4">Belongs to the HAUS4 family.</text>
</comment>
<comment type="sequence caution" evidence="4">
    <conflict type="erroneous gene model prediction">
        <sequence resource="EMBL-CDS" id="AAG51195"/>
    </conflict>
</comment>
<gene>
    <name type="primary">AUG4</name>
    <name evidence="5" type="ordered locus">At1g50710</name>
    <name evidence="7" type="ORF">F17J6.23</name>
    <name evidence="6" type="ORF">F4M15.6</name>
</gene>
<organism evidence="8">
    <name type="scientific">Arabidopsis thaliana</name>
    <name type="common">Mouse-ear cress</name>
    <dbReference type="NCBI Taxonomy" id="3702"/>
    <lineage>
        <taxon>Eukaryota</taxon>
        <taxon>Viridiplantae</taxon>
        <taxon>Streptophyta</taxon>
        <taxon>Embryophyta</taxon>
        <taxon>Tracheophyta</taxon>
        <taxon>Spermatophyta</taxon>
        <taxon>Magnoliopsida</taxon>
        <taxon>eudicotyledons</taxon>
        <taxon>Gunneridae</taxon>
        <taxon>Pentapetalae</taxon>
        <taxon>rosids</taxon>
        <taxon>malvids</taxon>
        <taxon>Brassicales</taxon>
        <taxon>Brassicaceae</taxon>
        <taxon>Camelineae</taxon>
        <taxon>Arabidopsis</taxon>
    </lineage>
</organism>
<keyword id="KW-0131">Cell cycle</keyword>
<keyword id="KW-0132">Cell division</keyword>
<keyword id="KW-0175">Coiled coil</keyword>
<keyword id="KW-0963">Cytoplasm</keyword>
<keyword id="KW-0206">Cytoskeleton</keyword>
<keyword id="KW-0493">Microtubule</keyword>
<keyword id="KW-0498">Mitosis</keyword>
<keyword id="KW-1185">Reference proteome</keyword>
<protein>
    <recommendedName>
        <fullName evidence="3">AUGMIN subunit 4</fullName>
    </recommendedName>
</protein>
<dbReference type="EMBL" id="AC079027">
    <property type="protein sequence ID" value="AAG50783.1"/>
    <property type="molecule type" value="Genomic_DNA"/>
</dbReference>
<dbReference type="EMBL" id="AC079279">
    <property type="protein sequence ID" value="AAG51195.1"/>
    <property type="status" value="ALT_SEQ"/>
    <property type="molecule type" value="Genomic_DNA"/>
</dbReference>
<dbReference type="EMBL" id="CP002684">
    <property type="protein sequence ID" value="AEE32582.1"/>
    <property type="molecule type" value="Genomic_DNA"/>
</dbReference>
<dbReference type="EMBL" id="AK117516">
    <property type="protein sequence ID" value="BAC42179.1"/>
    <property type="molecule type" value="mRNA"/>
</dbReference>
<dbReference type="EMBL" id="BT005509">
    <property type="protein sequence ID" value="AAO63929.1"/>
    <property type="molecule type" value="mRNA"/>
</dbReference>
<dbReference type="PIR" id="H96543">
    <property type="entry name" value="H96543"/>
</dbReference>
<dbReference type="RefSeq" id="NP_175486.2">
    <property type="nucleotide sequence ID" value="NM_103953.3"/>
</dbReference>
<dbReference type="SMR" id="Q8GYM3"/>
<dbReference type="FunCoup" id="Q8GYM3">
    <property type="interactions" value="1286"/>
</dbReference>
<dbReference type="IntAct" id="Q8GYM3">
    <property type="interactions" value="2"/>
</dbReference>
<dbReference type="STRING" id="3702.Q8GYM3"/>
<dbReference type="PaxDb" id="3702-AT1G50710.1"/>
<dbReference type="ProteomicsDB" id="240929"/>
<dbReference type="EnsemblPlants" id="AT1G50710.1">
    <property type="protein sequence ID" value="AT1G50710.1"/>
    <property type="gene ID" value="AT1G50710"/>
</dbReference>
<dbReference type="GeneID" id="841493"/>
<dbReference type="Gramene" id="AT1G50710.1">
    <property type="protein sequence ID" value="AT1G50710.1"/>
    <property type="gene ID" value="AT1G50710"/>
</dbReference>
<dbReference type="KEGG" id="ath:AT1G50710"/>
<dbReference type="Araport" id="AT1G50710"/>
<dbReference type="TAIR" id="AT1G50710">
    <property type="gene designation" value="AUG4"/>
</dbReference>
<dbReference type="eggNOG" id="ENOG502QQ47">
    <property type="taxonomic scope" value="Eukaryota"/>
</dbReference>
<dbReference type="HOGENOM" id="CLU_036252_0_0_1"/>
<dbReference type="InParanoid" id="Q8GYM3"/>
<dbReference type="OMA" id="HQYDGLR"/>
<dbReference type="PhylomeDB" id="Q8GYM3"/>
<dbReference type="PRO" id="PR:Q8GYM3"/>
<dbReference type="Proteomes" id="UP000006548">
    <property type="component" value="Chromosome 1"/>
</dbReference>
<dbReference type="ExpressionAtlas" id="Q8GYM3">
    <property type="expression patterns" value="baseline and differential"/>
</dbReference>
<dbReference type="GO" id="GO:0070652">
    <property type="term" value="C:HAUS complex"/>
    <property type="evidence" value="ECO:0007669"/>
    <property type="project" value="InterPro"/>
</dbReference>
<dbReference type="GO" id="GO:0009524">
    <property type="term" value="C:phragmoplast"/>
    <property type="evidence" value="ECO:0007669"/>
    <property type="project" value="UniProtKB-SubCell"/>
</dbReference>
<dbReference type="GO" id="GO:0005876">
    <property type="term" value="C:spindle microtubule"/>
    <property type="evidence" value="ECO:0000314"/>
    <property type="project" value="TAIR"/>
</dbReference>
<dbReference type="GO" id="GO:0051011">
    <property type="term" value="F:microtubule minus-end binding"/>
    <property type="evidence" value="ECO:0000314"/>
    <property type="project" value="TAIR"/>
</dbReference>
<dbReference type="GO" id="GO:0051301">
    <property type="term" value="P:cell division"/>
    <property type="evidence" value="ECO:0007669"/>
    <property type="project" value="UniProtKB-KW"/>
</dbReference>
<dbReference type="GO" id="GO:0051225">
    <property type="term" value="P:spindle assembly"/>
    <property type="evidence" value="ECO:0007669"/>
    <property type="project" value="InterPro"/>
</dbReference>
<dbReference type="InterPro" id="IPR029327">
    <property type="entry name" value="HAUS4"/>
</dbReference>
<dbReference type="PANTHER" id="PTHR16219">
    <property type="entry name" value="AUGMIN SUBUNIT 4 FAMILY MEMBER"/>
    <property type="match status" value="1"/>
</dbReference>
<dbReference type="PANTHER" id="PTHR16219:SF1">
    <property type="entry name" value="HAUS AUGMIN-LIKE COMPLEX SUBUNIT 4"/>
    <property type="match status" value="1"/>
</dbReference>
<dbReference type="Pfam" id="PF14735">
    <property type="entry name" value="HAUS4"/>
    <property type="match status" value="1"/>
</dbReference>
<evidence type="ECO:0000255" key="1"/>
<evidence type="ECO:0000269" key="2">
    <source>
    </source>
</evidence>
<evidence type="ECO:0000303" key="3">
    <source>
    </source>
</evidence>
<evidence type="ECO:0000305" key="4"/>
<evidence type="ECO:0000312" key="5">
    <source>
        <dbReference type="Araport" id="AT1G50710"/>
    </source>
</evidence>
<evidence type="ECO:0000312" key="6">
    <source>
        <dbReference type="EMBL" id="AAG50783.1"/>
    </source>
</evidence>
<evidence type="ECO:0000312" key="7">
    <source>
        <dbReference type="EMBL" id="AAG51195.1"/>
    </source>
</evidence>
<evidence type="ECO:0000312" key="8">
    <source>
        <dbReference type="EMBL" id="BAC42179.1"/>
    </source>
</evidence>
<reference key="1">
    <citation type="journal article" date="2000" name="Nature">
        <title>Sequence and analysis of chromosome 1 of the plant Arabidopsis thaliana.</title>
        <authorList>
            <person name="Theologis A."/>
            <person name="Ecker J.R."/>
            <person name="Palm C.J."/>
            <person name="Federspiel N.A."/>
            <person name="Kaul S."/>
            <person name="White O."/>
            <person name="Alonso J."/>
            <person name="Altafi H."/>
            <person name="Araujo R."/>
            <person name="Bowman C.L."/>
            <person name="Brooks S.Y."/>
            <person name="Buehler E."/>
            <person name="Chan A."/>
            <person name="Chao Q."/>
            <person name="Chen H."/>
            <person name="Cheuk R.F."/>
            <person name="Chin C.W."/>
            <person name="Chung M.K."/>
            <person name="Conn L."/>
            <person name="Conway A.B."/>
            <person name="Conway A.R."/>
            <person name="Creasy T.H."/>
            <person name="Dewar K."/>
            <person name="Dunn P."/>
            <person name="Etgu P."/>
            <person name="Feldblyum T.V."/>
            <person name="Feng J.-D."/>
            <person name="Fong B."/>
            <person name="Fujii C.Y."/>
            <person name="Gill J.E."/>
            <person name="Goldsmith A.D."/>
            <person name="Haas B."/>
            <person name="Hansen N.F."/>
            <person name="Hughes B."/>
            <person name="Huizar L."/>
            <person name="Hunter J.L."/>
            <person name="Jenkins J."/>
            <person name="Johnson-Hopson C."/>
            <person name="Khan S."/>
            <person name="Khaykin E."/>
            <person name="Kim C.J."/>
            <person name="Koo H.L."/>
            <person name="Kremenetskaia I."/>
            <person name="Kurtz D.B."/>
            <person name="Kwan A."/>
            <person name="Lam B."/>
            <person name="Langin-Hooper S."/>
            <person name="Lee A."/>
            <person name="Lee J.M."/>
            <person name="Lenz C.A."/>
            <person name="Li J.H."/>
            <person name="Li Y.-P."/>
            <person name="Lin X."/>
            <person name="Liu S.X."/>
            <person name="Liu Z.A."/>
            <person name="Luros J.S."/>
            <person name="Maiti R."/>
            <person name="Marziali A."/>
            <person name="Militscher J."/>
            <person name="Miranda M."/>
            <person name="Nguyen M."/>
            <person name="Nierman W.C."/>
            <person name="Osborne B.I."/>
            <person name="Pai G."/>
            <person name="Peterson J."/>
            <person name="Pham P.K."/>
            <person name="Rizzo M."/>
            <person name="Rooney T."/>
            <person name="Rowley D."/>
            <person name="Sakano H."/>
            <person name="Salzberg S.L."/>
            <person name="Schwartz J.R."/>
            <person name="Shinn P."/>
            <person name="Southwick A.M."/>
            <person name="Sun H."/>
            <person name="Tallon L.J."/>
            <person name="Tambunga G."/>
            <person name="Toriumi M.J."/>
            <person name="Town C.D."/>
            <person name="Utterback T."/>
            <person name="Van Aken S."/>
            <person name="Vaysberg M."/>
            <person name="Vysotskaia V.S."/>
            <person name="Walker M."/>
            <person name="Wu D."/>
            <person name="Yu G."/>
            <person name="Fraser C.M."/>
            <person name="Venter J.C."/>
            <person name="Davis R.W."/>
        </authorList>
    </citation>
    <scope>NUCLEOTIDE SEQUENCE [LARGE SCALE GENOMIC DNA]</scope>
    <source>
        <strain>cv. Columbia</strain>
    </source>
</reference>
<reference key="2">
    <citation type="journal article" date="2017" name="Plant J.">
        <title>Araport11: a complete reannotation of the Arabidopsis thaliana reference genome.</title>
        <authorList>
            <person name="Cheng C.Y."/>
            <person name="Krishnakumar V."/>
            <person name="Chan A.P."/>
            <person name="Thibaud-Nissen F."/>
            <person name="Schobel S."/>
            <person name="Town C.D."/>
        </authorList>
    </citation>
    <scope>GENOME REANNOTATION</scope>
    <source>
        <strain>cv. Columbia</strain>
    </source>
</reference>
<reference key="3">
    <citation type="journal article" date="2002" name="Science">
        <title>Functional annotation of a full-length Arabidopsis cDNA collection.</title>
        <authorList>
            <person name="Seki M."/>
            <person name="Narusaka M."/>
            <person name="Kamiya A."/>
            <person name="Ishida J."/>
            <person name="Satou M."/>
            <person name="Sakurai T."/>
            <person name="Nakajima M."/>
            <person name="Enju A."/>
            <person name="Akiyama K."/>
            <person name="Oono Y."/>
            <person name="Muramatsu M."/>
            <person name="Hayashizaki Y."/>
            <person name="Kawai J."/>
            <person name="Carninci P."/>
            <person name="Itoh M."/>
            <person name="Ishii Y."/>
            <person name="Arakawa T."/>
            <person name="Shibata K."/>
            <person name="Shinagawa A."/>
            <person name="Shinozaki K."/>
        </authorList>
    </citation>
    <scope>NUCLEOTIDE SEQUENCE [LARGE SCALE MRNA]</scope>
    <source>
        <strain>cv. Columbia</strain>
    </source>
</reference>
<reference key="4">
    <citation type="journal article" date="2003" name="Science">
        <title>Empirical analysis of transcriptional activity in the Arabidopsis genome.</title>
        <authorList>
            <person name="Yamada K."/>
            <person name="Lim J."/>
            <person name="Dale J.M."/>
            <person name="Chen H."/>
            <person name="Shinn P."/>
            <person name="Palm C.J."/>
            <person name="Southwick A.M."/>
            <person name="Wu H.C."/>
            <person name="Kim C.J."/>
            <person name="Nguyen M."/>
            <person name="Pham P.K."/>
            <person name="Cheuk R.F."/>
            <person name="Karlin-Newmann G."/>
            <person name="Liu S.X."/>
            <person name="Lam B."/>
            <person name="Sakano H."/>
            <person name="Wu T."/>
            <person name="Yu G."/>
            <person name="Miranda M."/>
            <person name="Quach H.L."/>
            <person name="Tripp M."/>
            <person name="Chang C.H."/>
            <person name="Lee J.M."/>
            <person name="Toriumi M.J."/>
            <person name="Chan M.M."/>
            <person name="Tang C.C."/>
            <person name="Onodera C.S."/>
            <person name="Deng J.M."/>
            <person name="Akiyama K."/>
            <person name="Ansari Y."/>
            <person name="Arakawa T."/>
            <person name="Banh J."/>
            <person name="Banno F."/>
            <person name="Bowser L."/>
            <person name="Brooks S.Y."/>
            <person name="Carninci P."/>
            <person name="Chao Q."/>
            <person name="Choy N."/>
            <person name="Enju A."/>
            <person name="Goldsmith A.D."/>
            <person name="Gurjal M."/>
            <person name="Hansen N.F."/>
            <person name="Hayashizaki Y."/>
            <person name="Johnson-Hopson C."/>
            <person name="Hsuan V.W."/>
            <person name="Iida K."/>
            <person name="Karnes M."/>
            <person name="Khan S."/>
            <person name="Koesema E."/>
            <person name="Ishida J."/>
            <person name="Jiang P.X."/>
            <person name="Jones T."/>
            <person name="Kawai J."/>
            <person name="Kamiya A."/>
            <person name="Meyers C."/>
            <person name="Nakajima M."/>
            <person name="Narusaka M."/>
            <person name="Seki M."/>
            <person name="Sakurai T."/>
            <person name="Satou M."/>
            <person name="Tamse R."/>
            <person name="Vaysberg M."/>
            <person name="Wallender E.K."/>
            <person name="Wong C."/>
            <person name="Yamamura Y."/>
            <person name="Yuan S."/>
            <person name="Shinozaki K."/>
            <person name="Davis R.W."/>
            <person name="Theologis A."/>
            <person name="Ecker J.R."/>
        </authorList>
    </citation>
    <scope>NUCLEOTIDE SEQUENCE [LARGE SCALE MRNA]</scope>
    <source>
        <strain>cv. Columbia</strain>
    </source>
</reference>
<reference key="5">
    <citation type="journal article" date="2012" name="Plant Cell">
        <title>Characterization of the Arabidopsis augmin complex uncovers its critical function in the assembly of the acentrosomal spindle and phragmoplast microtubule arrays.</title>
        <authorList>
            <person name="Hotta T."/>
            <person name="Kong Z."/>
            <person name="Ho C.M."/>
            <person name="Zeng C.J."/>
            <person name="Horio T."/>
            <person name="Fong S."/>
            <person name="Vuong T."/>
            <person name="Lee Y.R."/>
            <person name="Liu B."/>
        </authorList>
    </citation>
    <scope>FUNCTION</scope>
    <scope>IDENTIFICATION IN THE AUGMIN COMPLEX BY MASS SPECTROMETRY</scope>
    <scope>DISRUPTION PHENOTYPE</scope>
    <scope>SUBCELLULAR LOCATION</scope>
</reference>
<proteinExistence type="evidence at protein level"/>
<accession>Q8GYM3</accession>
<accession>Q9C6P2</accession>
<accession>Q9C6T4</accession>
<name>AUG4_ARATH</name>
<feature type="chain" id="PRO_0000434094" description="AUGMIN subunit 4">
    <location>
        <begin position="1"/>
        <end position="423"/>
    </location>
</feature>
<feature type="coiled-coil region" evidence="1">
    <location>
        <begin position="267"/>
        <end position="287"/>
    </location>
</feature>